<keyword id="KW-0687">Ribonucleoprotein</keyword>
<keyword id="KW-0689">Ribosomal protein</keyword>
<keyword id="KW-0694">RNA-binding</keyword>
<keyword id="KW-0699">rRNA-binding</keyword>
<gene>
    <name evidence="1" type="primary">rplO</name>
    <name type="ordered locus">SAS2122</name>
</gene>
<dbReference type="EMBL" id="BX571857">
    <property type="protein sequence ID" value="CAG43933.1"/>
    <property type="molecule type" value="Genomic_DNA"/>
</dbReference>
<dbReference type="RefSeq" id="WP_000766074.1">
    <property type="nucleotide sequence ID" value="NC_002953.3"/>
</dbReference>
<dbReference type="SMR" id="Q6G790"/>
<dbReference type="GeneID" id="98346543"/>
<dbReference type="KEGG" id="sas:SAS2122"/>
<dbReference type="HOGENOM" id="CLU_055188_4_2_9"/>
<dbReference type="GO" id="GO:0022625">
    <property type="term" value="C:cytosolic large ribosomal subunit"/>
    <property type="evidence" value="ECO:0007669"/>
    <property type="project" value="TreeGrafter"/>
</dbReference>
<dbReference type="GO" id="GO:0019843">
    <property type="term" value="F:rRNA binding"/>
    <property type="evidence" value="ECO:0007669"/>
    <property type="project" value="UniProtKB-UniRule"/>
</dbReference>
<dbReference type="GO" id="GO:0003735">
    <property type="term" value="F:structural constituent of ribosome"/>
    <property type="evidence" value="ECO:0007669"/>
    <property type="project" value="InterPro"/>
</dbReference>
<dbReference type="GO" id="GO:0006412">
    <property type="term" value="P:translation"/>
    <property type="evidence" value="ECO:0007669"/>
    <property type="project" value="UniProtKB-UniRule"/>
</dbReference>
<dbReference type="FunFam" id="3.100.10.10:FF:000004">
    <property type="entry name" value="50S ribosomal protein L15"/>
    <property type="match status" value="1"/>
</dbReference>
<dbReference type="Gene3D" id="3.100.10.10">
    <property type="match status" value="1"/>
</dbReference>
<dbReference type="HAMAP" id="MF_01341">
    <property type="entry name" value="Ribosomal_uL15"/>
    <property type="match status" value="1"/>
</dbReference>
<dbReference type="InterPro" id="IPR030878">
    <property type="entry name" value="Ribosomal_uL15"/>
</dbReference>
<dbReference type="InterPro" id="IPR021131">
    <property type="entry name" value="Ribosomal_uL15/eL18"/>
</dbReference>
<dbReference type="InterPro" id="IPR036227">
    <property type="entry name" value="Ribosomal_uL15/eL18_sf"/>
</dbReference>
<dbReference type="InterPro" id="IPR005749">
    <property type="entry name" value="Ribosomal_uL15_bac-type"/>
</dbReference>
<dbReference type="InterPro" id="IPR001196">
    <property type="entry name" value="Ribosomal_uL15_CS"/>
</dbReference>
<dbReference type="NCBIfam" id="TIGR01071">
    <property type="entry name" value="rplO_bact"/>
    <property type="match status" value="1"/>
</dbReference>
<dbReference type="PANTHER" id="PTHR12934">
    <property type="entry name" value="50S RIBOSOMAL PROTEIN L15"/>
    <property type="match status" value="1"/>
</dbReference>
<dbReference type="PANTHER" id="PTHR12934:SF11">
    <property type="entry name" value="LARGE RIBOSOMAL SUBUNIT PROTEIN UL15M"/>
    <property type="match status" value="1"/>
</dbReference>
<dbReference type="Pfam" id="PF00828">
    <property type="entry name" value="Ribosomal_L27A"/>
    <property type="match status" value="1"/>
</dbReference>
<dbReference type="SUPFAM" id="SSF52080">
    <property type="entry name" value="Ribosomal proteins L15p and L18e"/>
    <property type="match status" value="1"/>
</dbReference>
<dbReference type="PROSITE" id="PS00475">
    <property type="entry name" value="RIBOSOMAL_L15"/>
    <property type="match status" value="1"/>
</dbReference>
<protein>
    <recommendedName>
        <fullName evidence="1">Large ribosomal subunit protein uL15</fullName>
    </recommendedName>
    <alternativeName>
        <fullName evidence="3">50S ribosomal protein L15</fullName>
    </alternativeName>
</protein>
<feature type="chain" id="PRO_0000104810" description="Large ribosomal subunit protein uL15">
    <location>
        <begin position="1"/>
        <end position="146"/>
    </location>
</feature>
<feature type="region of interest" description="Disordered" evidence="2">
    <location>
        <begin position="1"/>
        <end position="54"/>
    </location>
</feature>
<feature type="compositionally biased region" description="Basic and acidic residues" evidence="2">
    <location>
        <begin position="1"/>
        <end position="18"/>
    </location>
</feature>
<feature type="compositionally biased region" description="Gly residues" evidence="2">
    <location>
        <begin position="42"/>
        <end position="52"/>
    </location>
</feature>
<accession>Q6G790</accession>
<organism>
    <name type="scientific">Staphylococcus aureus (strain MSSA476)</name>
    <dbReference type="NCBI Taxonomy" id="282459"/>
    <lineage>
        <taxon>Bacteria</taxon>
        <taxon>Bacillati</taxon>
        <taxon>Bacillota</taxon>
        <taxon>Bacilli</taxon>
        <taxon>Bacillales</taxon>
        <taxon>Staphylococcaceae</taxon>
        <taxon>Staphylococcus</taxon>
    </lineage>
</organism>
<sequence length="146" mass="15597">MKLHELKPAEGSRKERNRVGRGVATGNGKTSGRGHKGQKARSGGGVRPGFEGGQLPLFRRLPKRGFTNINRKEYAIVNLDQLNKFEDGTEVTPALLVESGVVKNEKSGIKILGNGSLDKKLTVKAHKFSASAAEAIDAKGGAHEVI</sequence>
<reference key="1">
    <citation type="journal article" date="2004" name="Proc. Natl. Acad. Sci. U.S.A.">
        <title>Complete genomes of two clinical Staphylococcus aureus strains: evidence for the rapid evolution of virulence and drug resistance.</title>
        <authorList>
            <person name="Holden M.T.G."/>
            <person name="Feil E.J."/>
            <person name="Lindsay J.A."/>
            <person name="Peacock S.J."/>
            <person name="Day N.P.J."/>
            <person name="Enright M.C."/>
            <person name="Foster T.J."/>
            <person name="Moore C.E."/>
            <person name="Hurst L."/>
            <person name="Atkin R."/>
            <person name="Barron A."/>
            <person name="Bason N."/>
            <person name="Bentley S.D."/>
            <person name="Chillingworth C."/>
            <person name="Chillingworth T."/>
            <person name="Churcher C."/>
            <person name="Clark L."/>
            <person name="Corton C."/>
            <person name="Cronin A."/>
            <person name="Doggett J."/>
            <person name="Dowd L."/>
            <person name="Feltwell T."/>
            <person name="Hance Z."/>
            <person name="Harris B."/>
            <person name="Hauser H."/>
            <person name="Holroyd S."/>
            <person name="Jagels K."/>
            <person name="James K.D."/>
            <person name="Lennard N."/>
            <person name="Line A."/>
            <person name="Mayes R."/>
            <person name="Moule S."/>
            <person name="Mungall K."/>
            <person name="Ormond D."/>
            <person name="Quail M.A."/>
            <person name="Rabbinowitsch E."/>
            <person name="Rutherford K.M."/>
            <person name="Sanders M."/>
            <person name="Sharp S."/>
            <person name="Simmonds M."/>
            <person name="Stevens K."/>
            <person name="Whitehead S."/>
            <person name="Barrell B.G."/>
            <person name="Spratt B.G."/>
            <person name="Parkhill J."/>
        </authorList>
    </citation>
    <scope>NUCLEOTIDE SEQUENCE [LARGE SCALE GENOMIC DNA]</scope>
    <source>
        <strain>MSSA476</strain>
    </source>
</reference>
<proteinExistence type="inferred from homology"/>
<comment type="function">
    <text evidence="1">Binds to the 23S rRNA.</text>
</comment>
<comment type="subunit">
    <text evidence="1">Part of the 50S ribosomal subunit.</text>
</comment>
<comment type="similarity">
    <text evidence="1">Belongs to the universal ribosomal protein uL15 family.</text>
</comment>
<evidence type="ECO:0000255" key="1">
    <source>
        <dbReference type="HAMAP-Rule" id="MF_01341"/>
    </source>
</evidence>
<evidence type="ECO:0000256" key="2">
    <source>
        <dbReference type="SAM" id="MobiDB-lite"/>
    </source>
</evidence>
<evidence type="ECO:0000305" key="3"/>
<name>RL15_STAAS</name>